<proteinExistence type="inferred from homology"/>
<protein>
    <recommendedName>
        <fullName evidence="2">tRNA (guanine-N(7)-)-methyltransferase</fullName>
        <ecNumber evidence="2">2.1.1.33</ecNumber>
    </recommendedName>
    <alternativeName>
        <fullName evidence="2">tRNA (guanine(46)-N(7))-methyltransferase</fullName>
    </alternativeName>
    <alternativeName>
        <fullName evidence="2">tRNA(m7G46)-methyltransferase</fullName>
    </alternativeName>
</protein>
<comment type="function">
    <text evidence="2">Catalyzes the formation of N(7)-methylguanine at position 46 (m7G46) in tRNA.</text>
</comment>
<comment type="catalytic activity">
    <reaction evidence="2">
        <text>guanosine(46) in tRNA + S-adenosyl-L-methionine = N(7)-methylguanosine(46) in tRNA + S-adenosyl-L-homocysteine</text>
        <dbReference type="Rhea" id="RHEA:42708"/>
        <dbReference type="Rhea" id="RHEA-COMP:10188"/>
        <dbReference type="Rhea" id="RHEA-COMP:10189"/>
        <dbReference type="ChEBI" id="CHEBI:57856"/>
        <dbReference type="ChEBI" id="CHEBI:59789"/>
        <dbReference type="ChEBI" id="CHEBI:74269"/>
        <dbReference type="ChEBI" id="CHEBI:74480"/>
        <dbReference type="EC" id="2.1.1.33"/>
    </reaction>
</comment>
<comment type="pathway">
    <text evidence="2">tRNA modification; N(7)-methylguanine-tRNA biosynthesis.</text>
</comment>
<comment type="similarity">
    <text evidence="2">Belongs to the class I-like SAM-binding methyltransferase superfamily. TrmB family.</text>
</comment>
<keyword id="KW-0489">Methyltransferase</keyword>
<keyword id="KW-1185">Reference proteome</keyword>
<keyword id="KW-0949">S-adenosyl-L-methionine</keyword>
<keyword id="KW-0808">Transferase</keyword>
<keyword id="KW-0819">tRNA processing</keyword>
<feature type="chain" id="PRO_0000171311" description="tRNA (guanine-N(7)-)-methyltransferase">
    <location>
        <begin position="1"/>
        <end position="265"/>
    </location>
</feature>
<feature type="region of interest" description="Disordered" evidence="3">
    <location>
        <begin position="1"/>
        <end position="40"/>
    </location>
</feature>
<feature type="compositionally biased region" description="Low complexity" evidence="3">
    <location>
        <begin position="19"/>
        <end position="32"/>
    </location>
</feature>
<feature type="active site" evidence="1">
    <location>
        <position position="170"/>
    </location>
</feature>
<feature type="binding site" evidence="2">
    <location>
        <position position="95"/>
    </location>
    <ligand>
        <name>S-adenosyl-L-methionine</name>
        <dbReference type="ChEBI" id="CHEBI:59789"/>
    </ligand>
</feature>
<feature type="binding site" evidence="2">
    <location>
        <position position="120"/>
    </location>
    <ligand>
        <name>S-adenosyl-L-methionine</name>
        <dbReference type="ChEBI" id="CHEBI:59789"/>
    </ligand>
</feature>
<feature type="binding site" evidence="2">
    <location>
        <position position="147"/>
    </location>
    <ligand>
        <name>S-adenosyl-L-methionine</name>
        <dbReference type="ChEBI" id="CHEBI:59789"/>
    </ligand>
</feature>
<feature type="binding site" evidence="2">
    <location>
        <position position="170"/>
    </location>
    <ligand>
        <name>S-adenosyl-L-methionine</name>
        <dbReference type="ChEBI" id="CHEBI:59789"/>
    </ligand>
</feature>
<feature type="binding site" evidence="2">
    <location>
        <position position="174"/>
    </location>
    <ligand>
        <name>substrate</name>
    </ligand>
</feature>
<feature type="binding site" evidence="2">
    <location>
        <position position="206"/>
    </location>
    <ligand>
        <name>substrate</name>
    </ligand>
</feature>
<feature type="binding site" evidence="2">
    <location>
        <begin position="241"/>
        <end position="244"/>
    </location>
    <ligand>
        <name>substrate</name>
    </ligand>
</feature>
<gene>
    <name evidence="2" type="primary">trmB</name>
    <name type="ordered locus">BPSL2642</name>
</gene>
<accession>Q63RN0</accession>
<reference key="1">
    <citation type="journal article" date="2004" name="Proc. Natl. Acad. Sci. U.S.A.">
        <title>Genomic plasticity of the causative agent of melioidosis, Burkholderia pseudomallei.</title>
        <authorList>
            <person name="Holden M.T.G."/>
            <person name="Titball R.W."/>
            <person name="Peacock S.J."/>
            <person name="Cerdeno-Tarraga A.-M."/>
            <person name="Atkins T."/>
            <person name="Crossman L.C."/>
            <person name="Pitt T."/>
            <person name="Churcher C."/>
            <person name="Mungall K.L."/>
            <person name="Bentley S.D."/>
            <person name="Sebaihia M."/>
            <person name="Thomson N.R."/>
            <person name="Bason N."/>
            <person name="Beacham I.R."/>
            <person name="Brooks K."/>
            <person name="Brown K.A."/>
            <person name="Brown N.F."/>
            <person name="Challis G.L."/>
            <person name="Cherevach I."/>
            <person name="Chillingworth T."/>
            <person name="Cronin A."/>
            <person name="Crossett B."/>
            <person name="Davis P."/>
            <person name="DeShazer D."/>
            <person name="Feltwell T."/>
            <person name="Fraser A."/>
            <person name="Hance Z."/>
            <person name="Hauser H."/>
            <person name="Holroyd S."/>
            <person name="Jagels K."/>
            <person name="Keith K.E."/>
            <person name="Maddison M."/>
            <person name="Moule S."/>
            <person name="Price C."/>
            <person name="Quail M.A."/>
            <person name="Rabbinowitsch E."/>
            <person name="Rutherford K."/>
            <person name="Sanders M."/>
            <person name="Simmonds M."/>
            <person name="Songsivilai S."/>
            <person name="Stevens K."/>
            <person name="Tumapa S."/>
            <person name="Vesaratchavest M."/>
            <person name="Whitehead S."/>
            <person name="Yeats C."/>
            <person name="Barrell B.G."/>
            <person name="Oyston P.C.F."/>
            <person name="Parkhill J."/>
        </authorList>
    </citation>
    <scope>NUCLEOTIDE SEQUENCE [LARGE SCALE GENOMIC DNA]</scope>
    <source>
        <strain>K96243</strain>
    </source>
</reference>
<dbReference type="EC" id="2.1.1.33" evidence="2"/>
<dbReference type="EMBL" id="BX571965">
    <property type="protein sequence ID" value="CAH36650.1"/>
    <property type="molecule type" value="Genomic_DNA"/>
</dbReference>
<dbReference type="RefSeq" id="WP_004527577.1">
    <property type="nucleotide sequence ID" value="NZ_CP009538.1"/>
</dbReference>
<dbReference type="RefSeq" id="YP_109238.1">
    <property type="nucleotide sequence ID" value="NC_006350.1"/>
</dbReference>
<dbReference type="SMR" id="Q63RN0"/>
<dbReference type="STRING" id="272560.BPSL2642"/>
<dbReference type="KEGG" id="bps:BPSL2642"/>
<dbReference type="PATRIC" id="fig|272560.51.peg.2705"/>
<dbReference type="eggNOG" id="COG0220">
    <property type="taxonomic scope" value="Bacteria"/>
</dbReference>
<dbReference type="UniPathway" id="UPA00989"/>
<dbReference type="Proteomes" id="UP000000605">
    <property type="component" value="Chromosome 1"/>
</dbReference>
<dbReference type="GO" id="GO:0043527">
    <property type="term" value="C:tRNA methyltransferase complex"/>
    <property type="evidence" value="ECO:0007669"/>
    <property type="project" value="TreeGrafter"/>
</dbReference>
<dbReference type="GO" id="GO:0008176">
    <property type="term" value="F:tRNA (guanine(46)-N7)-methyltransferase activity"/>
    <property type="evidence" value="ECO:0007669"/>
    <property type="project" value="UniProtKB-UniRule"/>
</dbReference>
<dbReference type="CDD" id="cd02440">
    <property type="entry name" value="AdoMet_MTases"/>
    <property type="match status" value="1"/>
</dbReference>
<dbReference type="FunFam" id="3.40.50.150:FF:000035">
    <property type="entry name" value="tRNA (guanine-N(7)-)-methyltransferase"/>
    <property type="match status" value="1"/>
</dbReference>
<dbReference type="Gene3D" id="3.40.50.150">
    <property type="entry name" value="Vaccinia Virus protein VP39"/>
    <property type="match status" value="1"/>
</dbReference>
<dbReference type="HAMAP" id="MF_01057">
    <property type="entry name" value="tRNA_methyltr_TrmB"/>
    <property type="match status" value="1"/>
</dbReference>
<dbReference type="InterPro" id="IPR029063">
    <property type="entry name" value="SAM-dependent_MTases_sf"/>
</dbReference>
<dbReference type="InterPro" id="IPR003358">
    <property type="entry name" value="tRNA_(Gua-N-7)_MeTrfase_Trmb"/>
</dbReference>
<dbReference type="InterPro" id="IPR055361">
    <property type="entry name" value="tRNA_methyltr_TrmB_bact"/>
</dbReference>
<dbReference type="NCBIfam" id="TIGR00091">
    <property type="entry name" value="tRNA (guanosine(46)-N7)-methyltransferase TrmB"/>
    <property type="match status" value="1"/>
</dbReference>
<dbReference type="PANTHER" id="PTHR23417">
    <property type="entry name" value="3-DEOXY-D-MANNO-OCTULOSONIC-ACID TRANSFERASE/TRNA GUANINE-N 7 - -METHYLTRANSFERASE"/>
    <property type="match status" value="1"/>
</dbReference>
<dbReference type="PANTHER" id="PTHR23417:SF14">
    <property type="entry name" value="PENTACOTRIPEPTIDE-REPEAT REGION OF PRORP DOMAIN-CONTAINING PROTEIN"/>
    <property type="match status" value="1"/>
</dbReference>
<dbReference type="Pfam" id="PF02390">
    <property type="entry name" value="Methyltransf_4"/>
    <property type="match status" value="1"/>
</dbReference>
<dbReference type="SUPFAM" id="SSF53335">
    <property type="entry name" value="S-adenosyl-L-methionine-dependent methyltransferases"/>
    <property type="match status" value="1"/>
</dbReference>
<dbReference type="PROSITE" id="PS51625">
    <property type="entry name" value="SAM_MT_TRMB"/>
    <property type="match status" value="1"/>
</dbReference>
<name>TRMB_BURPS</name>
<sequence length="265" mass="29102">MIHDDDPNAPGAPHDDDATAAPASATRAAPAAGDDDDANPLHLRRIRSFVTRAGRVSTGQRRAIDELGPRFVIPYGSAQPDWDAIFGRRAPRVLEIGFGMGASTAEIAALRPGDDFIGVEVHEPGVGALLKLIGEQQLSNIRIIQHDAVEVLAQMIAPDSLDGVHIFFPDPWHKARHHKRRLIQPPFVAQLAAHLKPGAYLHCATDWQNYAEQMLEVLSADPSLENTAQDYAPRPGYRPVTKFERRGLRLGHGVWDLVFRKKHAG</sequence>
<organism>
    <name type="scientific">Burkholderia pseudomallei (strain K96243)</name>
    <dbReference type="NCBI Taxonomy" id="272560"/>
    <lineage>
        <taxon>Bacteria</taxon>
        <taxon>Pseudomonadati</taxon>
        <taxon>Pseudomonadota</taxon>
        <taxon>Betaproteobacteria</taxon>
        <taxon>Burkholderiales</taxon>
        <taxon>Burkholderiaceae</taxon>
        <taxon>Burkholderia</taxon>
        <taxon>pseudomallei group</taxon>
    </lineage>
</organism>
<evidence type="ECO:0000250" key="1"/>
<evidence type="ECO:0000255" key="2">
    <source>
        <dbReference type="HAMAP-Rule" id="MF_01057"/>
    </source>
</evidence>
<evidence type="ECO:0000256" key="3">
    <source>
        <dbReference type="SAM" id="MobiDB-lite"/>
    </source>
</evidence>